<comment type="function">
    <text evidence="1">Required for maturation of urease via the functional incorporation of the urease nickel metallocenter.</text>
</comment>
<comment type="subunit">
    <text evidence="1">UreD, UreF and UreG form a complex that acts as a GTP-hydrolysis-dependent molecular chaperone, activating the urease apoprotein by helping to assemble the nickel containing metallocenter of UreC. The UreE protein probably delivers the nickel.</text>
</comment>
<comment type="subcellular location">
    <subcellularLocation>
        <location evidence="1">Cytoplasm</location>
    </subcellularLocation>
</comment>
<comment type="similarity">
    <text evidence="1">Belongs to the UreF family.</text>
</comment>
<accession>Q117Z4</accession>
<reference key="1">
    <citation type="journal article" date="2015" name="Proc. Natl. Acad. Sci. U.S.A.">
        <title>Trichodesmium genome maintains abundant, widespread noncoding DNA in situ, despite oligotrophic lifestyle.</title>
        <authorList>
            <person name="Walworth N."/>
            <person name="Pfreundt U."/>
            <person name="Nelson W.C."/>
            <person name="Mincer T."/>
            <person name="Heidelberg J.F."/>
            <person name="Fu F."/>
            <person name="Waterbury J.B."/>
            <person name="Glavina del Rio T."/>
            <person name="Goodwin L."/>
            <person name="Kyrpides N.C."/>
            <person name="Land M.L."/>
            <person name="Woyke T."/>
            <person name="Hutchins D.A."/>
            <person name="Hess W.R."/>
            <person name="Webb E.A."/>
        </authorList>
    </citation>
    <scope>NUCLEOTIDE SEQUENCE [LARGE SCALE GENOMIC DNA]</scope>
    <source>
        <strain>IMS101</strain>
    </source>
</reference>
<gene>
    <name evidence="1" type="primary">ureF</name>
    <name type="ordered locus">Tery_0751</name>
</gene>
<organism>
    <name type="scientific">Trichodesmium erythraeum (strain IMS101)</name>
    <dbReference type="NCBI Taxonomy" id="203124"/>
    <lineage>
        <taxon>Bacteria</taxon>
        <taxon>Bacillati</taxon>
        <taxon>Cyanobacteriota</taxon>
        <taxon>Cyanophyceae</taxon>
        <taxon>Oscillatoriophycideae</taxon>
        <taxon>Oscillatoriales</taxon>
        <taxon>Microcoleaceae</taxon>
        <taxon>Trichodesmium</taxon>
    </lineage>
</organism>
<keyword id="KW-0143">Chaperone</keyword>
<keyword id="KW-0963">Cytoplasm</keyword>
<keyword id="KW-0996">Nickel insertion</keyword>
<dbReference type="EMBL" id="CP000393">
    <property type="protein sequence ID" value="ABG50180.1"/>
    <property type="molecule type" value="Genomic_DNA"/>
</dbReference>
<dbReference type="RefSeq" id="WP_011610573.1">
    <property type="nucleotide sequence ID" value="NC_008312.1"/>
</dbReference>
<dbReference type="SMR" id="Q117Z4"/>
<dbReference type="STRING" id="203124.Tery_0751"/>
<dbReference type="KEGG" id="ter:Tery_0751"/>
<dbReference type="eggNOG" id="COG0830">
    <property type="taxonomic scope" value="Bacteria"/>
</dbReference>
<dbReference type="HOGENOM" id="CLU_049215_4_0_3"/>
<dbReference type="OrthoDB" id="9798772at2"/>
<dbReference type="GO" id="GO:0005737">
    <property type="term" value="C:cytoplasm"/>
    <property type="evidence" value="ECO:0007669"/>
    <property type="project" value="UniProtKB-SubCell"/>
</dbReference>
<dbReference type="GO" id="GO:0016151">
    <property type="term" value="F:nickel cation binding"/>
    <property type="evidence" value="ECO:0007669"/>
    <property type="project" value="UniProtKB-UniRule"/>
</dbReference>
<dbReference type="Gene3D" id="1.10.4190.10">
    <property type="entry name" value="Urease accessory protein UreF"/>
    <property type="match status" value="1"/>
</dbReference>
<dbReference type="HAMAP" id="MF_01385">
    <property type="entry name" value="UreF"/>
    <property type="match status" value="1"/>
</dbReference>
<dbReference type="InterPro" id="IPR002639">
    <property type="entry name" value="UreF"/>
</dbReference>
<dbReference type="InterPro" id="IPR038277">
    <property type="entry name" value="UreF_sf"/>
</dbReference>
<dbReference type="PANTHER" id="PTHR33620">
    <property type="entry name" value="UREASE ACCESSORY PROTEIN F"/>
    <property type="match status" value="1"/>
</dbReference>
<dbReference type="PANTHER" id="PTHR33620:SF1">
    <property type="entry name" value="UREASE ACCESSORY PROTEIN F"/>
    <property type="match status" value="1"/>
</dbReference>
<dbReference type="Pfam" id="PF01730">
    <property type="entry name" value="UreF"/>
    <property type="match status" value="1"/>
</dbReference>
<dbReference type="PIRSF" id="PIRSF009467">
    <property type="entry name" value="Ureas_acces_UreF"/>
    <property type="match status" value="1"/>
</dbReference>
<protein>
    <recommendedName>
        <fullName evidence="1">Urease accessory protein UreF</fullName>
    </recommendedName>
</protein>
<sequence length="232" mass="25603">MINSDISEQLALMQLSDSFFPTGSFTFSHGLETLVQTGKIQSQPEILYFLQILLRNKVGVSDVVALIHSYRGCKNGDIEAVRVADRMLFVQTAIAKNRETQRQSGRALLMVASSTWQDERLKTLNIDAVSGNIHCLHPVIFGAVTSVVGLDERNAVLAFLHGLVTNILGAAIRLGILGHIQAQQILLQLVPDIEAVWSTAVSMNLEQMWSCTPFIDIAQMQHPKLAHKLFAN</sequence>
<feature type="chain" id="PRO_0000344198" description="Urease accessory protein UreF">
    <location>
        <begin position="1"/>
        <end position="232"/>
    </location>
</feature>
<proteinExistence type="inferred from homology"/>
<evidence type="ECO:0000255" key="1">
    <source>
        <dbReference type="HAMAP-Rule" id="MF_01385"/>
    </source>
</evidence>
<name>UREF_TRIEI</name>